<feature type="chain" id="PRO_0000167642" description="Flavodoxin/ferredoxin--NADP reductase">
    <location>
        <begin position="1"/>
        <end position="249"/>
    </location>
</feature>
<feature type="domain" description="FAD-binding FR-type" evidence="2">
    <location>
        <begin position="2"/>
        <end position="102"/>
    </location>
</feature>
<feature type="binding site" evidence="1">
    <location>
        <begin position="51"/>
        <end position="54"/>
    </location>
    <ligand>
        <name>FAD</name>
        <dbReference type="ChEBI" id="CHEBI:57692"/>
    </ligand>
</feature>
<feature type="binding site" evidence="1">
    <location>
        <position position="67"/>
    </location>
    <ligand>
        <name>FAD</name>
        <dbReference type="ChEBI" id="CHEBI:57692"/>
    </ligand>
</feature>
<feature type="binding site" evidence="1">
    <location>
        <begin position="75"/>
        <end position="77"/>
    </location>
    <ligand>
        <name>FAD</name>
        <dbReference type="ChEBI" id="CHEBI:57692"/>
    </ligand>
</feature>
<feature type="binding site" evidence="1">
    <location>
        <position position="117"/>
    </location>
    <ligand>
        <name>FAD</name>
        <dbReference type="ChEBI" id="CHEBI:57692"/>
    </ligand>
</feature>
<feature type="binding site" evidence="1">
    <location>
        <begin position="144"/>
        <end position="145"/>
    </location>
    <ligand>
        <name>NADP(+)</name>
        <dbReference type="ChEBI" id="CHEBI:58349"/>
    </ligand>
</feature>
<feature type="binding site" evidence="1">
    <location>
        <begin position="174"/>
        <end position="175"/>
    </location>
    <ligand>
        <name>NADP(+)</name>
        <dbReference type="ChEBI" id="CHEBI:58349"/>
    </ligand>
</feature>
<feature type="binding site" evidence="1">
    <location>
        <position position="185"/>
    </location>
    <ligand>
        <name>NADP(+)</name>
        <dbReference type="ChEBI" id="CHEBI:58349"/>
    </ligand>
</feature>
<feature type="binding site" evidence="1">
    <location>
        <begin position="215"/>
        <end position="217"/>
    </location>
    <ligand>
        <name>NADP(+)</name>
        <dbReference type="ChEBI" id="CHEBI:58349"/>
    </ligand>
</feature>
<feature type="binding site" evidence="1">
    <location>
        <begin position="248"/>
        <end position="249"/>
    </location>
    <ligand>
        <name>FAD</name>
        <dbReference type="ChEBI" id="CHEBI:57692"/>
    </ligand>
</feature>
<dbReference type="EC" id="1.18.1.2" evidence="1"/>
<dbReference type="EC" id="1.19.1.1" evidence="1"/>
<dbReference type="EMBL" id="AE016826">
    <property type="protein sequence ID" value="AAO27229.1"/>
    <property type="molecule type" value="Genomic_DNA"/>
</dbReference>
<dbReference type="RefSeq" id="WP_011091630.1">
    <property type="nucleotide sequence ID" value="NC_004545.1"/>
</dbReference>
<dbReference type="SMR" id="Q89A28"/>
<dbReference type="STRING" id="224915.bbp_527"/>
<dbReference type="KEGG" id="bab:bbp_527"/>
<dbReference type="eggNOG" id="COG1018">
    <property type="taxonomic scope" value="Bacteria"/>
</dbReference>
<dbReference type="HOGENOM" id="CLU_003827_3_0_6"/>
<dbReference type="OrthoDB" id="9784483at2"/>
<dbReference type="Proteomes" id="UP000000601">
    <property type="component" value="Chromosome"/>
</dbReference>
<dbReference type="GO" id="GO:0005737">
    <property type="term" value="C:cytoplasm"/>
    <property type="evidence" value="ECO:0007669"/>
    <property type="project" value="UniProtKB-SubCell"/>
</dbReference>
<dbReference type="GO" id="GO:0004324">
    <property type="term" value="F:ferredoxin-NADP+ reductase activity"/>
    <property type="evidence" value="ECO:0007669"/>
    <property type="project" value="UniProtKB-EC"/>
</dbReference>
<dbReference type="GO" id="GO:0000166">
    <property type="term" value="F:nucleotide binding"/>
    <property type="evidence" value="ECO:0007669"/>
    <property type="project" value="UniProtKB-KW"/>
</dbReference>
<dbReference type="GO" id="GO:0034599">
    <property type="term" value="P:cellular response to oxidative stress"/>
    <property type="evidence" value="ECO:0007669"/>
    <property type="project" value="TreeGrafter"/>
</dbReference>
<dbReference type="GO" id="GO:0042167">
    <property type="term" value="P:heme catabolic process"/>
    <property type="evidence" value="ECO:0007669"/>
    <property type="project" value="TreeGrafter"/>
</dbReference>
<dbReference type="CDD" id="cd06195">
    <property type="entry name" value="FNR1"/>
    <property type="match status" value="1"/>
</dbReference>
<dbReference type="Gene3D" id="3.40.50.80">
    <property type="entry name" value="Nucleotide-binding domain of ferredoxin-NADP reductase (FNR) module"/>
    <property type="match status" value="1"/>
</dbReference>
<dbReference type="Gene3D" id="2.40.30.10">
    <property type="entry name" value="Translation factors"/>
    <property type="match status" value="1"/>
</dbReference>
<dbReference type="InterPro" id="IPR008333">
    <property type="entry name" value="Cbr1-like_FAD-bd_dom"/>
</dbReference>
<dbReference type="InterPro" id="IPR017927">
    <property type="entry name" value="FAD-bd_FR_type"/>
</dbReference>
<dbReference type="InterPro" id="IPR033892">
    <property type="entry name" value="FNR_bac"/>
</dbReference>
<dbReference type="InterPro" id="IPR039261">
    <property type="entry name" value="FNR_nucleotide-bd"/>
</dbReference>
<dbReference type="InterPro" id="IPR051930">
    <property type="entry name" value="FNR_type-1"/>
</dbReference>
<dbReference type="InterPro" id="IPR001433">
    <property type="entry name" value="OxRdtase_FAD/NAD-bd"/>
</dbReference>
<dbReference type="InterPro" id="IPR017938">
    <property type="entry name" value="Riboflavin_synthase-like_b-brl"/>
</dbReference>
<dbReference type="PANTHER" id="PTHR47878:SF1">
    <property type="entry name" value="FLAVODOXIN_FERREDOXIN--NADP REDUCTASE"/>
    <property type="match status" value="1"/>
</dbReference>
<dbReference type="PANTHER" id="PTHR47878">
    <property type="entry name" value="OXIDOREDUCTASE FAD/NAD(P)-BINDING DOMAIN PROTEIN"/>
    <property type="match status" value="1"/>
</dbReference>
<dbReference type="Pfam" id="PF00970">
    <property type="entry name" value="FAD_binding_6"/>
    <property type="match status" value="1"/>
</dbReference>
<dbReference type="Pfam" id="PF00175">
    <property type="entry name" value="NAD_binding_1"/>
    <property type="match status" value="1"/>
</dbReference>
<dbReference type="SUPFAM" id="SSF52343">
    <property type="entry name" value="Ferredoxin reductase-like, C-terminal NADP-linked domain"/>
    <property type="match status" value="1"/>
</dbReference>
<dbReference type="SUPFAM" id="SSF63380">
    <property type="entry name" value="Riboflavin synthase domain-like"/>
    <property type="match status" value="1"/>
</dbReference>
<dbReference type="PROSITE" id="PS51384">
    <property type="entry name" value="FAD_FR"/>
    <property type="match status" value="1"/>
</dbReference>
<accession>Q89A28</accession>
<protein>
    <recommendedName>
        <fullName evidence="1">Flavodoxin/ferredoxin--NADP reductase</fullName>
        <ecNumber evidence="1">1.18.1.2</ecNumber>
        <ecNumber evidence="1">1.19.1.1</ecNumber>
    </recommendedName>
    <alternativeName>
        <fullName evidence="1">Ferredoxin (flavodoxin):NADP(+) oxidoreductase</fullName>
    </alternativeName>
    <alternativeName>
        <fullName evidence="1">Ferredoxin--NADP reductase</fullName>
        <shortName evidence="1">FNR</shortName>
    </alternativeName>
    <alternativeName>
        <fullName evidence="1">Flavodoxin--NADP reductase</fullName>
        <shortName evidence="1">FLDR</shortName>
    </alternativeName>
</protein>
<comment type="function">
    <text evidence="1">Transports electrons between flavodoxin or ferredoxin and NADPH.</text>
</comment>
<comment type="catalytic activity">
    <reaction evidence="1">
        <text>2 reduced [2Fe-2S]-[ferredoxin] + NADP(+) + H(+) = 2 oxidized [2Fe-2S]-[ferredoxin] + NADPH</text>
        <dbReference type="Rhea" id="RHEA:20125"/>
        <dbReference type="Rhea" id="RHEA-COMP:10000"/>
        <dbReference type="Rhea" id="RHEA-COMP:10001"/>
        <dbReference type="ChEBI" id="CHEBI:15378"/>
        <dbReference type="ChEBI" id="CHEBI:33737"/>
        <dbReference type="ChEBI" id="CHEBI:33738"/>
        <dbReference type="ChEBI" id="CHEBI:57783"/>
        <dbReference type="ChEBI" id="CHEBI:58349"/>
        <dbReference type="EC" id="1.18.1.2"/>
    </reaction>
</comment>
<comment type="catalytic activity">
    <reaction evidence="1">
        <text>reduced [flavodoxin] + NADP(+) = oxidized [flavodoxin] + NADPH + 2 H(+)</text>
        <dbReference type="Rhea" id="RHEA:50756"/>
        <dbReference type="Rhea" id="RHEA-COMP:10622"/>
        <dbReference type="Rhea" id="RHEA-COMP:10623"/>
        <dbReference type="ChEBI" id="CHEBI:15378"/>
        <dbReference type="ChEBI" id="CHEBI:57618"/>
        <dbReference type="ChEBI" id="CHEBI:57783"/>
        <dbReference type="ChEBI" id="CHEBI:58210"/>
        <dbReference type="ChEBI" id="CHEBI:58349"/>
        <dbReference type="EC" id="1.19.1.1"/>
    </reaction>
</comment>
<comment type="cofactor">
    <cofactor evidence="1">
        <name>FAD</name>
        <dbReference type="ChEBI" id="CHEBI:57692"/>
    </cofactor>
</comment>
<comment type="subcellular location">
    <subcellularLocation>
        <location evidence="1">Cytoplasm</location>
    </subcellularLocation>
</comment>
<comment type="similarity">
    <text evidence="3">Belongs to the ferredoxin--NADP reductase type 1 family.</text>
</comment>
<sequence>MNTWITAKIIKIKKWKNNLFSVIVNAPISPFTAGQFTKLGYQKKNGKIIQRAYSFVNAPHEKNLEFYMVLIKNGQLTTKLYNLNNTDHIQIKKKSYGFFTLNEIPTCKILWMFATGTGIGPYLSMLKYQKNTEKFQKIVLIHAVRYRHDLTYFNEINNLKNIYNKKLYTQFIISREKTNFSLSGRIPQLLKTEELEKHINLFIENNTSHVMLCGNPDMVKQTQNFLINNKNMKKHLRRKPGQISSENYW</sequence>
<evidence type="ECO:0000250" key="1">
    <source>
        <dbReference type="UniProtKB" id="P28861"/>
    </source>
</evidence>
<evidence type="ECO:0000255" key="2">
    <source>
        <dbReference type="PROSITE-ProRule" id="PRU00716"/>
    </source>
</evidence>
<evidence type="ECO:0000305" key="3"/>
<organism>
    <name type="scientific">Buchnera aphidicola subsp. Baizongia pistaciae (strain Bp)</name>
    <dbReference type="NCBI Taxonomy" id="224915"/>
    <lineage>
        <taxon>Bacteria</taxon>
        <taxon>Pseudomonadati</taxon>
        <taxon>Pseudomonadota</taxon>
        <taxon>Gammaproteobacteria</taxon>
        <taxon>Enterobacterales</taxon>
        <taxon>Erwiniaceae</taxon>
        <taxon>Buchnera</taxon>
    </lineage>
</organism>
<gene>
    <name type="primary">fpr</name>
    <name type="ordered locus">bbp_527</name>
</gene>
<proteinExistence type="inferred from homology"/>
<reference key="1">
    <citation type="journal article" date="2003" name="Proc. Natl. Acad. Sci. U.S.A.">
        <title>Reductive genome evolution in Buchnera aphidicola.</title>
        <authorList>
            <person name="van Ham R.C.H.J."/>
            <person name="Kamerbeek J."/>
            <person name="Palacios C."/>
            <person name="Rausell C."/>
            <person name="Abascal F."/>
            <person name="Bastolla U."/>
            <person name="Fernandez J.M."/>
            <person name="Jimenez L."/>
            <person name="Postigo M."/>
            <person name="Silva F.J."/>
            <person name="Tamames J."/>
            <person name="Viguera E."/>
            <person name="Latorre A."/>
            <person name="Valencia A."/>
            <person name="Moran F."/>
            <person name="Moya A."/>
        </authorList>
    </citation>
    <scope>NUCLEOTIDE SEQUENCE [LARGE SCALE GENOMIC DNA]</scope>
    <source>
        <strain>Bp</strain>
    </source>
</reference>
<name>FENR_BUCBP</name>
<keyword id="KW-0963">Cytoplasm</keyword>
<keyword id="KW-0274">FAD</keyword>
<keyword id="KW-0285">Flavoprotein</keyword>
<keyword id="KW-0521">NADP</keyword>
<keyword id="KW-0547">Nucleotide-binding</keyword>
<keyword id="KW-0560">Oxidoreductase</keyword>
<keyword id="KW-1185">Reference proteome</keyword>